<accession>B2SH72</accession>
<keyword id="KW-0004">4Fe-4S</keyword>
<keyword id="KW-0963">Cytoplasm</keyword>
<keyword id="KW-0408">Iron</keyword>
<keyword id="KW-0411">Iron-sulfur</keyword>
<keyword id="KW-0479">Metal-binding</keyword>
<keyword id="KW-0949">S-adenosyl-L-methionine</keyword>
<keyword id="KW-0808">Transferase</keyword>
<name>LIPA_FRATM</name>
<protein>
    <recommendedName>
        <fullName evidence="1">Lipoyl synthase</fullName>
        <ecNumber evidence="1">2.8.1.8</ecNumber>
    </recommendedName>
    <alternativeName>
        <fullName evidence="1">Lip-syn</fullName>
        <shortName evidence="1">LS</shortName>
    </alternativeName>
    <alternativeName>
        <fullName evidence="1">Lipoate synthase</fullName>
    </alternativeName>
    <alternativeName>
        <fullName evidence="1">Lipoic acid synthase</fullName>
    </alternativeName>
    <alternativeName>
        <fullName evidence="1">Sulfur insertion protein LipA</fullName>
    </alternativeName>
</protein>
<evidence type="ECO:0000255" key="1">
    <source>
        <dbReference type="HAMAP-Rule" id="MF_00206"/>
    </source>
</evidence>
<evidence type="ECO:0000255" key="2">
    <source>
        <dbReference type="PROSITE-ProRule" id="PRU01266"/>
    </source>
</evidence>
<sequence length="327" mass="36854">MKEISGIKVKVESGSKYTTDHGFHAVKDGIRNKKENAVHVRKPDWLKVQKQDSKEYLKVKSITKKHKLSTVCEEARCPNINECWSHGTATIMLMGSVCTRACKFCSVDTGNPKGWLDKDEPMNAAESVKLMGLEYVVLTSVDRDDLEDGGAGHYAATITAIKNLDENIKVEALTPDFAGINENIDKIINTKVDVIAQNIETVERLTHPVRDPRAGYWQTLNFLKYVKQKSPNVLTKTSIMVGLGETDEEIYKTMDDARSVGIDIITLGQYMQPTKHHLSVERFVTPQQFEEYRKVGLEKGFLEVASGPMVRSSYRADRVFKRNNLDL</sequence>
<dbReference type="EC" id="2.8.1.8" evidence="1"/>
<dbReference type="EMBL" id="CP000915">
    <property type="protein sequence ID" value="ACD31080.1"/>
    <property type="molecule type" value="Genomic_DNA"/>
</dbReference>
<dbReference type="SMR" id="B2SH72"/>
<dbReference type="KEGG" id="ftm:FTM_1205"/>
<dbReference type="HOGENOM" id="CLU_033144_2_0_6"/>
<dbReference type="UniPathway" id="UPA00538">
    <property type="reaction ID" value="UER00593"/>
</dbReference>
<dbReference type="GO" id="GO:0005737">
    <property type="term" value="C:cytoplasm"/>
    <property type="evidence" value="ECO:0007669"/>
    <property type="project" value="UniProtKB-SubCell"/>
</dbReference>
<dbReference type="GO" id="GO:0051539">
    <property type="term" value="F:4 iron, 4 sulfur cluster binding"/>
    <property type="evidence" value="ECO:0007669"/>
    <property type="project" value="UniProtKB-UniRule"/>
</dbReference>
<dbReference type="GO" id="GO:0016992">
    <property type="term" value="F:lipoate synthase activity"/>
    <property type="evidence" value="ECO:0007669"/>
    <property type="project" value="UniProtKB-UniRule"/>
</dbReference>
<dbReference type="GO" id="GO:0046872">
    <property type="term" value="F:metal ion binding"/>
    <property type="evidence" value="ECO:0007669"/>
    <property type="project" value="UniProtKB-KW"/>
</dbReference>
<dbReference type="FunFam" id="3.20.20.70:FF:000040">
    <property type="entry name" value="Lipoyl synthase"/>
    <property type="match status" value="1"/>
</dbReference>
<dbReference type="Gene3D" id="3.20.20.70">
    <property type="entry name" value="Aldolase class I"/>
    <property type="match status" value="1"/>
</dbReference>
<dbReference type="HAMAP" id="MF_00206">
    <property type="entry name" value="Lipoyl_synth"/>
    <property type="match status" value="1"/>
</dbReference>
<dbReference type="InterPro" id="IPR013785">
    <property type="entry name" value="Aldolase_TIM"/>
</dbReference>
<dbReference type="InterPro" id="IPR006638">
    <property type="entry name" value="Elp3/MiaA/NifB-like_rSAM"/>
</dbReference>
<dbReference type="InterPro" id="IPR031691">
    <property type="entry name" value="LIAS_N"/>
</dbReference>
<dbReference type="InterPro" id="IPR003698">
    <property type="entry name" value="Lipoyl_synth"/>
</dbReference>
<dbReference type="InterPro" id="IPR007197">
    <property type="entry name" value="rSAM"/>
</dbReference>
<dbReference type="NCBIfam" id="TIGR00510">
    <property type="entry name" value="lipA"/>
    <property type="match status" value="1"/>
</dbReference>
<dbReference type="NCBIfam" id="NF004019">
    <property type="entry name" value="PRK05481.1"/>
    <property type="match status" value="1"/>
</dbReference>
<dbReference type="NCBIfam" id="NF009544">
    <property type="entry name" value="PRK12928.1"/>
    <property type="match status" value="1"/>
</dbReference>
<dbReference type="PANTHER" id="PTHR10949">
    <property type="entry name" value="LIPOYL SYNTHASE"/>
    <property type="match status" value="1"/>
</dbReference>
<dbReference type="PANTHER" id="PTHR10949:SF0">
    <property type="entry name" value="LIPOYL SYNTHASE, MITOCHONDRIAL"/>
    <property type="match status" value="1"/>
</dbReference>
<dbReference type="Pfam" id="PF16881">
    <property type="entry name" value="LIAS_N"/>
    <property type="match status" value="1"/>
</dbReference>
<dbReference type="Pfam" id="PF04055">
    <property type="entry name" value="Radical_SAM"/>
    <property type="match status" value="1"/>
</dbReference>
<dbReference type="PIRSF" id="PIRSF005963">
    <property type="entry name" value="Lipoyl_synth"/>
    <property type="match status" value="1"/>
</dbReference>
<dbReference type="SFLD" id="SFLDF00271">
    <property type="entry name" value="lipoyl_synthase"/>
    <property type="match status" value="1"/>
</dbReference>
<dbReference type="SFLD" id="SFLDS00029">
    <property type="entry name" value="Radical_SAM"/>
    <property type="match status" value="1"/>
</dbReference>
<dbReference type="SMART" id="SM00729">
    <property type="entry name" value="Elp3"/>
    <property type="match status" value="1"/>
</dbReference>
<dbReference type="SUPFAM" id="SSF102114">
    <property type="entry name" value="Radical SAM enzymes"/>
    <property type="match status" value="1"/>
</dbReference>
<dbReference type="PROSITE" id="PS51918">
    <property type="entry name" value="RADICAL_SAM"/>
    <property type="match status" value="1"/>
</dbReference>
<gene>
    <name evidence="1" type="primary">lipA</name>
    <name type="ordered locus">FTM_1205</name>
</gene>
<comment type="function">
    <text evidence="1">Catalyzes the radical-mediated insertion of two sulfur atoms into the C-6 and C-8 positions of the octanoyl moiety bound to the lipoyl domains of lipoate-dependent enzymes, thereby converting the octanoylated domains into lipoylated derivatives.</text>
</comment>
<comment type="catalytic activity">
    <reaction evidence="1">
        <text>[[Fe-S] cluster scaffold protein carrying a second [4Fe-4S](2+) cluster] + N(6)-octanoyl-L-lysyl-[protein] + 2 oxidized [2Fe-2S]-[ferredoxin] + 2 S-adenosyl-L-methionine + 4 H(+) = [[Fe-S] cluster scaffold protein] + N(6)-[(R)-dihydrolipoyl]-L-lysyl-[protein] + 4 Fe(3+) + 2 hydrogen sulfide + 2 5'-deoxyadenosine + 2 L-methionine + 2 reduced [2Fe-2S]-[ferredoxin]</text>
        <dbReference type="Rhea" id="RHEA:16585"/>
        <dbReference type="Rhea" id="RHEA-COMP:9928"/>
        <dbReference type="Rhea" id="RHEA-COMP:10000"/>
        <dbReference type="Rhea" id="RHEA-COMP:10001"/>
        <dbReference type="Rhea" id="RHEA-COMP:10475"/>
        <dbReference type="Rhea" id="RHEA-COMP:14568"/>
        <dbReference type="Rhea" id="RHEA-COMP:14569"/>
        <dbReference type="ChEBI" id="CHEBI:15378"/>
        <dbReference type="ChEBI" id="CHEBI:17319"/>
        <dbReference type="ChEBI" id="CHEBI:29034"/>
        <dbReference type="ChEBI" id="CHEBI:29919"/>
        <dbReference type="ChEBI" id="CHEBI:33722"/>
        <dbReference type="ChEBI" id="CHEBI:33737"/>
        <dbReference type="ChEBI" id="CHEBI:33738"/>
        <dbReference type="ChEBI" id="CHEBI:57844"/>
        <dbReference type="ChEBI" id="CHEBI:59789"/>
        <dbReference type="ChEBI" id="CHEBI:78809"/>
        <dbReference type="ChEBI" id="CHEBI:83100"/>
        <dbReference type="EC" id="2.8.1.8"/>
    </reaction>
</comment>
<comment type="cofactor">
    <cofactor evidence="1">
        <name>[4Fe-4S] cluster</name>
        <dbReference type="ChEBI" id="CHEBI:49883"/>
    </cofactor>
    <text evidence="1">Binds 2 [4Fe-4S] clusters per subunit. One cluster is coordinated with 3 cysteines and an exchangeable S-adenosyl-L-methionine.</text>
</comment>
<comment type="pathway">
    <text evidence="1">Protein modification; protein lipoylation via endogenous pathway; protein N(6)-(lipoyl)lysine from octanoyl-[acyl-carrier-protein]: step 2/2.</text>
</comment>
<comment type="subcellular location">
    <subcellularLocation>
        <location evidence="1">Cytoplasm</location>
    </subcellularLocation>
</comment>
<comment type="similarity">
    <text evidence="1">Belongs to the radical SAM superfamily. Lipoyl synthase family.</text>
</comment>
<feature type="chain" id="PRO_1000099604" description="Lipoyl synthase">
    <location>
        <begin position="1"/>
        <end position="327"/>
    </location>
</feature>
<feature type="domain" description="Radical SAM core" evidence="2">
    <location>
        <begin position="83"/>
        <end position="302"/>
    </location>
</feature>
<feature type="binding site" evidence="1">
    <location>
        <position position="72"/>
    </location>
    <ligand>
        <name>[4Fe-4S] cluster</name>
        <dbReference type="ChEBI" id="CHEBI:49883"/>
        <label>1</label>
    </ligand>
</feature>
<feature type="binding site" evidence="1">
    <location>
        <position position="77"/>
    </location>
    <ligand>
        <name>[4Fe-4S] cluster</name>
        <dbReference type="ChEBI" id="CHEBI:49883"/>
        <label>1</label>
    </ligand>
</feature>
<feature type="binding site" evidence="1">
    <location>
        <position position="83"/>
    </location>
    <ligand>
        <name>[4Fe-4S] cluster</name>
        <dbReference type="ChEBI" id="CHEBI:49883"/>
        <label>1</label>
    </ligand>
</feature>
<feature type="binding site" evidence="1">
    <location>
        <position position="98"/>
    </location>
    <ligand>
        <name>[4Fe-4S] cluster</name>
        <dbReference type="ChEBI" id="CHEBI:49883"/>
        <label>2</label>
        <note>4Fe-4S-S-AdoMet</note>
    </ligand>
</feature>
<feature type="binding site" evidence="1">
    <location>
        <position position="102"/>
    </location>
    <ligand>
        <name>[4Fe-4S] cluster</name>
        <dbReference type="ChEBI" id="CHEBI:49883"/>
        <label>2</label>
        <note>4Fe-4S-S-AdoMet</note>
    </ligand>
</feature>
<feature type="binding site" evidence="1">
    <location>
        <position position="105"/>
    </location>
    <ligand>
        <name>[4Fe-4S] cluster</name>
        <dbReference type="ChEBI" id="CHEBI:49883"/>
        <label>2</label>
        <note>4Fe-4S-S-AdoMet</note>
    </ligand>
</feature>
<feature type="binding site" evidence="1">
    <location>
        <position position="313"/>
    </location>
    <ligand>
        <name>[4Fe-4S] cluster</name>
        <dbReference type="ChEBI" id="CHEBI:49883"/>
        <label>1</label>
    </ligand>
</feature>
<organism>
    <name type="scientific">Francisella tularensis subsp. mediasiatica (strain FSC147)</name>
    <dbReference type="NCBI Taxonomy" id="441952"/>
    <lineage>
        <taxon>Bacteria</taxon>
        <taxon>Pseudomonadati</taxon>
        <taxon>Pseudomonadota</taxon>
        <taxon>Gammaproteobacteria</taxon>
        <taxon>Thiotrichales</taxon>
        <taxon>Francisellaceae</taxon>
        <taxon>Francisella</taxon>
    </lineage>
</organism>
<reference key="1">
    <citation type="journal article" date="2009" name="PLoS Pathog.">
        <title>Molecular evolutionary consequences of niche restriction in Francisella tularensis, a facultative intracellular pathogen.</title>
        <authorList>
            <person name="Larsson P."/>
            <person name="Elfsmark D."/>
            <person name="Svensson K."/>
            <person name="Wikstroem P."/>
            <person name="Forsman M."/>
            <person name="Brettin T."/>
            <person name="Keim P."/>
            <person name="Johansson A."/>
        </authorList>
    </citation>
    <scope>NUCLEOTIDE SEQUENCE [LARGE SCALE GENOMIC DNA]</scope>
    <source>
        <strain>FSC147</strain>
    </source>
</reference>
<proteinExistence type="inferred from homology"/>